<keyword id="KW-0028">Amino-acid biosynthesis</keyword>
<keyword id="KW-0963">Cytoplasm</keyword>
<keyword id="KW-0220">Diaminopimelate biosynthesis</keyword>
<keyword id="KW-0456">Lyase</keyword>
<keyword id="KW-0457">Lysine biosynthesis</keyword>
<keyword id="KW-1185">Reference proteome</keyword>
<keyword id="KW-0704">Schiff base</keyword>
<feature type="chain" id="PRO_1000050168" description="4-hydroxy-tetrahydrodipicolinate synthase">
    <location>
        <begin position="1"/>
        <end position="299"/>
    </location>
</feature>
<feature type="active site" description="Proton donor/acceptor" evidence="1">
    <location>
        <position position="133"/>
    </location>
</feature>
<feature type="active site" description="Schiff-base intermediate with substrate" evidence="1">
    <location>
        <position position="161"/>
    </location>
</feature>
<feature type="binding site" evidence="1">
    <location>
        <position position="45"/>
    </location>
    <ligand>
        <name>pyruvate</name>
        <dbReference type="ChEBI" id="CHEBI:15361"/>
    </ligand>
</feature>
<feature type="binding site" evidence="1">
    <location>
        <position position="203"/>
    </location>
    <ligand>
        <name>pyruvate</name>
        <dbReference type="ChEBI" id="CHEBI:15361"/>
    </ligand>
</feature>
<feature type="site" description="Part of a proton relay during catalysis" evidence="1">
    <location>
        <position position="44"/>
    </location>
</feature>
<feature type="site" description="Part of a proton relay during catalysis" evidence="1">
    <location>
        <position position="107"/>
    </location>
</feature>
<reference key="1">
    <citation type="journal article" date="2005" name="Genome Res.">
        <title>Genome sequence of Blochmannia pennsylvanicus indicates parallel evolutionary trends among bacterial mutualists of insects.</title>
        <authorList>
            <person name="Degnan P.H."/>
            <person name="Lazarus A.B."/>
            <person name="Wernegreen J.J."/>
        </authorList>
    </citation>
    <scope>NUCLEOTIDE SEQUENCE [LARGE SCALE GENOMIC DNA]</scope>
    <source>
        <strain>BPEN</strain>
    </source>
</reference>
<name>DAPA_BLOPB</name>
<dbReference type="EC" id="4.3.3.7" evidence="1"/>
<dbReference type="EMBL" id="CP000016">
    <property type="protein sequence ID" value="AAZ41146.1"/>
    <property type="molecule type" value="Genomic_DNA"/>
</dbReference>
<dbReference type="RefSeq" id="WP_011283057.1">
    <property type="nucleotide sequence ID" value="NC_007292.1"/>
</dbReference>
<dbReference type="SMR" id="Q492F5"/>
<dbReference type="STRING" id="291272.BPEN_536"/>
<dbReference type="KEGG" id="bpn:BPEN_536"/>
<dbReference type="eggNOG" id="COG0329">
    <property type="taxonomic scope" value="Bacteria"/>
</dbReference>
<dbReference type="HOGENOM" id="CLU_049343_7_0_6"/>
<dbReference type="OrthoDB" id="9782828at2"/>
<dbReference type="UniPathway" id="UPA00034">
    <property type="reaction ID" value="UER00017"/>
</dbReference>
<dbReference type="Proteomes" id="UP000007794">
    <property type="component" value="Chromosome"/>
</dbReference>
<dbReference type="GO" id="GO:0005829">
    <property type="term" value="C:cytosol"/>
    <property type="evidence" value="ECO:0007669"/>
    <property type="project" value="TreeGrafter"/>
</dbReference>
<dbReference type="GO" id="GO:0008840">
    <property type="term" value="F:4-hydroxy-tetrahydrodipicolinate synthase activity"/>
    <property type="evidence" value="ECO:0007669"/>
    <property type="project" value="UniProtKB-UniRule"/>
</dbReference>
<dbReference type="GO" id="GO:0019877">
    <property type="term" value="P:diaminopimelate biosynthetic process"/>
    <property type="evidence" value="ECO:0007669"/>
    <property type="project" value="UniProtKB-UniRule"/>
</dbReference>
<dbReference type="GO" id="GO:0009089">
    <property type="term" value="P:lysine biosynthetic process via diaminopimelate"/>
    <property type="evidence" value="ECO:0007669"/>
    <property type="project" value="UniProtKB-UniRule"/>
</dbReference>
<dbReference type="CDD" id="cd00950">
    <property type="entry name" value="DHDPS"/>
    <property type="match status" value="1"/>
</dbReference>
<dbReference type="FunFam" id="3.20.20.70:FF:000046">
    <property type="entry name" value="4-hydroxy-tetrahydrodipicolinate synthase"/>
    <property type="match status" value="1"/>
</dbReference>
<dbReference type="Gene3D" id="3.20.20.70">
    <property type="entry name" value="Aldolase class I"/>
    <property type="match status" value="1"/>
</dbReference>
<dbReference type="HAMAP" id="MF_00418">
    <property type="entry name" value="DapA"/>
    <property type="match status" value="1"/>
</dbReference>
<dbReference type="InterPro" id="IPR013785">
    <property type="entry name" value="Aldolase_TIM"/>
</dbReference>
<dbReference type="InterPro" id="IPR005263">
    <property type="entry name" value="DapA"/>
</dbReference>
<dbReference type="InterPro" id="IPR002220">
    <property type="entry name" value="DapA-like"/>
</dbReference>
<dbReference type="InterPro" id="IPR020625">
    <property type="entry name" value="Schiff_base-form_aldolases_AS"/>
</dbReference>
<dbReference type="NCBIfam" id="TIGR00674">
    <property type="entry name" value="dapA"/>
    <property type="match status" value="1"/>
</dbReference>
<dbReference type="PANTHER" id="PTHR12128:SF66">
    <property type="entry name" value="4-HYDROXY-2-OXOGLUTARATE ALDOLASE, MITOCHONDRIAL"/>
    <property type="match status" value="1"/>
</dbReference>
<dbReference type="PANTHER" id="PTHR12128">
    <property type="entry name" value="DIHYDRODIPICOLINATE SYNTHASE"/>
    <property type="match status" value="1"/>
</dbReference>
<dbReference type="Pfam" id="PF00701">
    <property type="entry name" value="DHDPS"/>
    <property type="match status" value="1"/>
</dbReference>
<dbReference type="PIRSF" id="PIRSF001365">
    <property type="entry name" value="DHDPS"/>
    <property type="match status" value="1"/>
</dbReference>
<dbReference type="PRINTS" id="PR00146">
    <property type="entry name" value="DHPICSNTHASE"/>
</dbReference>
<dbReference type="SMART" id="SM01130">
    <property type="entry name" value="DHDPS"/>
    <property type="match status" value="1"/>
</dbReference>
<dbReference type="SUPFAM" id="SSF51569">
    <property type="entry name" value="Aldolase"/>
    <property type="match status" value="1"/>
</dbReference>
<dbReference type="PROSITE" id="PS00666">
    <property type="entry name" value="DHDPS_2"/>
    <property type="match status" value="1"/>
</dbReference>
<organism>
    <name type="scientific">Blochmanniella pennsylvanica (strain BPEN)</name>
    <dbReference type="NCBI Taxonomy" id="291272"/>
    <lineage>
        <taxon>Bacteria</taxon>
        <taxon>Pseudomonadati</taxon>
        <taxon>Pseudomonadota</taxon>
        <taxon>Gammaproteobacteria</taxon>
        <taxon>Enterobacterales</taxon>
        <taxon>Enterobacteriaceae</taxon>
        <taxon>ant endosymbionts</taxon>
        <taxon>Candidatus Blochmanniella</taxon>
    </lineage>
</organism>
<accession>Q492F5</accession>
<comment type="function">
    <text evidence="1">Catalyzes the condensation of (S)-aspartate-beta-semialdehyde [(S)-ASA] and pyruvate to 4-hydroxy-tetrahydrodipicolinate (HTPA).</text>
</comment>
<comment type="catalytic activity">
    <reaction evidence="1">
        <text>L-aspartate 4-semialdehyde + pyruvate = (2S,4S)-4-hydroxy-2,3,4,5-tetrahydrodipicolinate + H2O + H(+)</text>
        <dbReference type="Rhea" id="RHEA:34171"/>
        <dbReference type="ChEBI" id="CHEBI:15361"/>
        <dbReference type="ChEBI" id="CHEBI:15377"/>
        <dbReference type="ChEBI" id="CHEBI:15378"/>
        <dbReference type="ChEBI" id="CHEBI:67139"/>
        <dbReference type="ChEBI" id="CHEBI:537519"/>
        <dbReference type="EC" id="4.3.3.7"/>
    </reaction>
</comment>
<comment type="pathway">
    <text evidence="1">Amino-acid biosynthesis; L-lysine biosynthesis via DAP pathway; (S)-tetrahydrodipicolinate from L-aspartate: step 3/4.</text>
</comment>
<comment type="subunit">
    <text evidence="1">Homotetramer; dimer of dimers.</text>
</comment>
<comment type="subcellular location">
    <subcellularLocation>
        <location evidence="1">Cytoplasm</location>
    </subcellularLocation>
</comment>
<comment type="similarity">
    <text evidence="1">Belongs to the DapA family.</text>
</comment>
<comment type="caution">
    <text evidence="2">Was originally thought to be a dihydrodipicolinate synthase (DHDPS), catalyzing the condensation of (S)-aspartate-beta-semialdehyde [(S)-ASA] and pyruvate to dihydrodipicolinate (DHDP). However, it was shown in E.coli that the product of the enzymatic reaction is not dihydrodipicolinate but in fact (4S)-4-hydroxy-2,3,4,5-tetrahydro-(2S)-dipicolinic acid (HTPA), and that the consecutive dehydration reaction leading to DHDP is not spontaneous but catalyzed by DapB.</text>
</comment>
<protein>
    <recommendedName>
        <fullName evidence="1">4-hydroxy-tetrahydrodipicolinate synthase</fullName>
        <shortName evidence="1">HTPA synthase</shortName>
        <ecNumber evidence="1">4.3.3.7</ecNumber>
    </recommendedName>
</protein>
<proteinExistence type="inferred from homology"/>
<sequence length="299" mass="32701">MFMGSIVALITPMDLKGTVDRISLKKLVDHHVVSGTSAIVSVGTTGEMSGLTHEEHVDVVMRTLEFSDGRLPVIAGTGANSTAEAVALTNKFNDSDIAACLSVTPYYNRPNQEGLFQHFKAISESTDLPQILYNVPIRTGCDMLPITVSRLAKIKNIVGIKEATGNLNRVNQLKQLVHEDFILLSGDDLSALDFMKLGGVGVISVTANIAAKEMAELCKLANENDFSTAQHINQRLMPVHQALFIDSNPIPVKWACKELGLISHYVLRLPMTVLSEVHRDVLKQALIDSGLFYNQSNYK</sequence>
<evidence type="ECO:0000255" key="1">
    <source>
        <dbReference type="HAMAP-Rule" id="MF_00418"/>
    </source>
</evidence>
<evidence type="ECO:0000305" key="2"/>
<gene>
    <name evidence="1" type="primary">dapA</name>
    <name type="ordered locus">BPEN_536</name>
</gene>